<sequence length="409" mass="45041">MSFIATPQFMHFDEPLPLQSGGSIADYDLAFETYGQLNADKSNAIVVCHALNASHHVAGSYEGQPKSEGWWDNMIGPGKPVDTDKFFVIGINNLGSCFGSTGPMHTNPATGKPYGADFPVVTVEDWVDAQARLLDRLGIQTLAAVLGGSLGGMQALSWSLRYPERMRHAVVVASAPNLNAENIAFNEVARRAIVTDPDFNGGHFYEHGVVPARGLRIARMVGHITYLSDDVMNQKFGRSLRAPTLPAARGSLPPEGTDPTRGGPASDRRDYLYSTQDVEFQIESYLRYQGEKFSGYFDANTYLLITRALDYFDPARCHDGDLTRALAVAKARFLLVSFTTDWRFAPARSREIVKSLLENNRDVSYAEIDAPHGHDAFLLDDPRYMSVMRSYFEGIAKELKTTERAGGAA</sequence>
<feature type="chain" id="PRO_0000440301" description="Homoserine O-succinyltransferase">
    <location>
        <begin position="1"/>
        <end position="409"/>
    </location>
</feature>
<feature type="domain" description="AB hydrolase-1" evidence="1">
    <location>
        <begin position="43"/>
        <end position="380"/>
    </location>
</feature>
<feature type="region of interest" description="Disordered" evidence="2">
    <location>
        <begin position="244"/>
        <end position="268"/>
    </location>
</feature>
<feature type="active site" description="Nucleophile" evidence="1">
    <location>
        <position position="149"/>
    </location>
</feature>
<feature type="active site" evidence="1">
    <location>
        <position position="341"/>
    </location>
</feature>
<feature type="active site" evidence="1">
    <location>
        <position position="374"/>
    </location>
</feature>
<feature type="binding site" evidence="1">
    <location>
        <position position="219"/>
    </location>
    <ligand>
        <name>substrate</name>
    </ligand>
</feature>
<feature type="binding site" evidence="1">
    <location>
        <position position="375"/>
    </location>
    <ligand>
        <name>substrate</name>
    </ligand>
</feature>
<feature type="site" description="Important for acyl-CoA specificity" evidence="1 5">
    <location>
        <position position="343"/>
    </location>
</feature>
<keyword id="KW-0012">Acyltransferase</keyword>
<keyword id="KW-0028">Amino-acid biosynthesis</keyword>
<keyword id="KW-0963">Cytoplasm</keyword>
<keyword id="KW-0486">Methionine biosynthesis</keyword>
<keyword id="KW-0808">Transferase</keyword>
<accession>B7X2B6</accession>
<comment type="function">
    <text evidence="1 3">Transfers a succinyl group from succinyl-CoA to L-homoserine, forming succinyl-L-homoserine.</text>
</comment>
<comment type="catalytic activity">
    <reaction evidence="1 3">
        <text>L-homoserine + succinyl-CoA = O-succinyl-L-homoserine + CoA</text>
        <dbReference type="Rhea" id="RHEA:22008"/>
        <dbReference type="ChEBI" id="CHEBI:57287"/>
        <dbReference type="ChEBI" id="CHEBI:57292"/>
        <dbReference type="ChEBI" id="CHEBI:57476"/>
        <dbReference type="ChEBI" id="CHEBI:57661"/>
        <dbReference type="EC" id="2.3.1.46"/>
    </reaction>
</comment>
<comment type="pathway">
    <text evidence="1">Amino-acid biosynthesis; L-methionine biosynthesis via de novo pathway; O-succinyl-L-homoserine from L-homoserine: step 1/1.</text>
</comment>
<comment type="subunit">
    <text evidence="1">Homodimer.</text>
</comment>
<comment type="subcellular location">
    <subcellularLocation>
        <location evidence="1">Cytoplasm</location>
    </subcellularLocation>
</comment>
<comment type="similarity">
    <text evidence="1">Belongs to the AB hydrolase superfamily. MetX family.</text>
</comment>
<reference key="1">
    <citation type="submission" date="2006-11" db="EMBL/GenBank/DDBJ databases">
        <authorList>
            <person name="Copeland A."/>
            <person name="Lucas S."/>
            <person name="Lapidus A."/>
            <person name="Barry K."/>
            <person name="Glavina del Rio T."/>
            <person name="Dalin E."/>
            <person name="Tice H."/>
            <person name="Bruce D."/>
            <person name="Pitluck S."/>
            <person name="Richardson P."/>
        </authorList>
    </citation>
    <scope>NUCLEOTIDE SEQUENCE [LARGE SCALE GENOMIC DNA]</scope>
    <source>
        <strain>DSM 14576 / KF-1</strain>
    </source>
</reference>
<reference key="2">
    <citation type="journal article" date="2017" name="Nat. Chem. Biol.">
        <title>Parallel evolution of non-homologous isofunctional enzymes in methionine biosynthesis.</title>
        <authorList>
            <person name="Bastard K."/>
            <person name="Perret A."/>
            <person name="Mariage A."/>
            <person name="Bessonnet T."/>
            <person name="Pinet-Turpault A."/>
            <person name="Petit J.L."/>
            <person name="Darii E."/>
            <person name="Bazire P."/>
            <person name="Vergne-Vaxelaire C."/>
            <person name="Brewee C."/>
            <person name="Debard A."/>
            <person name="Pellouin V."/>
            <person name="Besnard-Gonnet M."/>
            <person name="Artiguenave F."/>
            <person name="Medigue C."/>
            <person name="Vallenet D."/>
            <person name="Danchin A."/>
            <person name="Zaparucha A."/>
            <person name="Weissenbach J."/>
            <person name="Salanoubat M."/>
            <person name="de Berardinis V."/>
        </authorList>
    </citation>
    <scope>FUNCTION</scope>
    <scope>CATALYTIC ACTIVITY</scope>
</reference>
<evidence type="ECO:0000255" key="1">
    <source>
        <dbReference type="HAMAP-Rule" id="MF_00296"/>
    </source>
</evidence>
<evidence type="ECO:0000256" key="2">
    <source>
        <dbReference type="SAM" id="MobiDB-lite"/>
    </source>
</evidence>
<evidence type="ECO:0000269" key="3">
    <source>
    </source>
</evidence>
<evidence type="ECO:0000303" key="4">
    <source>
    </source>
</evidence>
<evidence type="ECO:0000305" key="5">
    <source>
    </source>
</evidence>
<evidence type="ECO:0000312" key="6">
    <source>
        <dbReference type="EMBL" id="EED70230.1"/>
    </source>
</evidence>
<proteinExistence type="evidence at protein level"/>
<dbReference type="EC" id="2.3.1.46" evidence="1 3"/>
<dbReference type="EMBL" id="AAUJ02000001">
    <property type="protein sequence ID" value="EED70230.1"/>
    <property type="molecule type" value="Genomic_DNA"/>
</dbReference>
<dbReference type="RefSeq" id="WP_003060196.1">
    <property type="nucleotide sequence ID" value="NZ_AAUJ02000001.1"/>
</dbReference>
<dbReference type="SMR" id="B7X2B6"/>
<dbReference type="ESTHER" id="comtk-metxs">
    <property type="family name" value="Homoserine_transacetylase"/>
</dbReference>
<dbReference type="eggNOG" id="COG2021">
    <property type="taxonomic scope" value="Bacteria"/>
</dbReference>
<dbReference type="OrthoDB" id="9800754at2"/>
<dbReference type="UniPathway" id="UPA00051">
    <property type="reaction ID" value="UER00075"/>
</dbReference>
<dbReference type="Proteomes" id="UP000003039">
    <property type="component" value="Unassembled WGS sequence"/>
</dbReference>
<dbReference type="GO" id="GO:0005737">
    <property type="term" value="C:cytoplasm"/>
    <property type="evidence" value="ECO:0007669"/>
    <property type="project" value="UniProtKB-SubCell"/>
</dbReference>
<dbReference type="GO" id="GO:0004414">
    <property type="term" value="F:homoserine O-acetyltransferase activity"/>
    <property type="evidence" value="ECO:0007669"/>
    <property type="project" value="TreeGrafter"/>
</dbReference>
<dbReference type="GO" id="GO:0008899">
    <property type="term" value="F:homoserine O-succinyltransferase activity"/>
    <property type="evidence" value="ECO:0007669"/>
    <property type="project" value="UniProtKB-UniRule"/>
</dbReference>
<dbReference type="GO" id="GO:0009092">
    <property type="term" value="P:homoserine metabolic process"/>
    <property type="evidence" value="ECO:0007669"/>
    <property type="project" value="TreeGrafter"/>
</dbReference>
<dbReference type="GO" id="GO:0009086">
    <property type="term" value="P:methionine biosynthetic process"/>
    <property type="evidence" value="ECO:0007669"/>
    <property type="project" value="UniProtKB-UniRule"/>
</dbReference>
<dbReference type="Gene3D" id="1.10.1740.110">
    <property type="match status" value="1"/>
</dbReference>
<dbReference type="Gene3D" id="3.40.50.1820">
    <property type="entry name" value="alpha/beta hydrolase"/>
    <property type="match status" value="1"/>
</dbReference>
<dbReference type="HAMAP" id="MF_00296">
    <property type="entry name" value="MetX_acyltransf"/>
    <property type="match status" value="1"/>
</dbReference>
<dbReference type="InterPro" id="IPR000073">
    <property type="entry name" value="AB_hydrolase_1"/>
</dbReference>
<dbReference type="InterPro" id="IPR029058">
    <property type="entry name" value="AB_hydrolase_fold"/>
</dbReference>
<dbReference type="InterPro" id="IPR008220">
    <property type="entry name" value="HAT_MetX-like"/>
</dbReference>
<dbReference type="NCBIfam" id="TIGR01392">
    <property type="entry name" value="homoserO_Ac_trn"/>
    <property type="match status" value="1"/>
</dbReference>
<dbReference type="NCBIfam" id="NF001209">
    <property type="entry name" value="PRK00175.1"/>
    <property type="match status" value="1"/>
</dbReference>
<dbReference type="PANTHER" id="PTHR32268">
    <property type="entry name" value="HOMOSERINE O-ACETYLTRANSFERASE"/>
    <property type="match status" value="1"/>
</dbReference>
<dbReference type="PANTHER" id="PTHR32268:SF11">
    <property type="entry name" value="HOMOSERINE O-ACETYLTRANSFERASE"/>
    <property type="match status" value="1"/>
</dbReference>
<dbReference type="Pfam" id="PF00561">
    <property type="entry name" value="Abhydrolase_1"/>
    <property type="match status" value="1"/>
</dbReference>
<dbReference type="PIRSF" id="PIRSF000443">
    <property type="entry name" value="Homoser_Ac_trans"/>
    <property type="match status" value="1"/>
</dbReference>
<dbReference type="SUPFAM" id="SSF53474">
    <property type="entry name" value="alpha/beta-Hydrolases"/>
    <property type="match status" value="1"/>
</dbReference>
<gene>
    <name evidence="1 4" type="primary">metXS</name>
    <name evidence="6" type="ORF">CtesDRAFT_PD5178</name>
</gene>
<protein>
    <recommendedName>
        <fullName evidence="1">Homoserine O-succinyltransferase</fullName>
        <shortName evidence="1 4">HST</shortName>
        <ecNumber evidence="1 3">2.3.1.46</ecNumber>
    </recommendedName>
    <alternativeName>
        <fullName evidence="1">Homoserine transsuccinylase</fullName>
        <shortName evidence="1">HTS</shortName>
    </alternativeName>
</protein>
<organism>
    <name type="scientific">Comamonas testosteroni (strain DSM 14576 / KF-1)</name>
    <name type="common">Pseudomonas testosteroni</name>
    <dbReference type="NCBI Taxonomy" id="399795"/>
    <lineage>
        <taxon>Bacteria</taxon>
        <taxon>Pseudomonadati</taxon>
        <taxon>Pseudomonadota</taxon>
        <taxon>Betaproteobacteria</taxon>
        <taxon>Burkholderiales</taxon>
        <taxon>Comamonadaceae</taxon>
        <taxon>Comamonas</taxon>
    </lineage>
</organism>
<name>METXS_COMTK</name>